<dbReference type="EC" id="1.14.14.17" evidence="1"/>
<dbReference type="EMBL" id="AAHF01000003">
    <property type="protein sequence ID" value="EAL91820.1"/>
    <property type="molecule type" value="Genomic_DNA"/>
</dbReference>
<dbReference type="RefSeq" id="XP_753858.1">
    <property type="nucleotide sequence ID" value="XM_748765.1"/>
</dbReference>
<dbReference type="SMR" id="E9R5G2"/>
<dbReference type="FunCoup" id="E9R5G2">
    <property type="interactions" value="180"/>
</dbReference>
<dbReference type="STRING" id="330879.E9R5G2"/>
<dbReference type="GlyCosmos" id="E9R5G2">
    <property type="glycosylation" value="1 site, No reported glycans"/>
</dbReference>
<dbReference type="EnsemblFungi" id="EAL91820">
    <property type="protein sequence ID" value="EAL91820"/>
    <property type="gene ID" value="AFUA_5G07780"/>
</dbReference>
<dbReference type="GeneID" id="3510794"/>
<dbReference type="KEGG" id="afm:AFUA_5G07780"/>
<dbReference type="VEuPathDB" id="FungiDB:Afu5g07780"/>
<dbReference type="eggNOG" id="KOG1298">
    <property type="taxonomic scope" value="Eukaryota"/>
</dbReference>
<dbReference type="HOGENOM" id="CLU_026390_0_0_1"/>
<dbReference type="InParanoid" id="E9R5G2"/>
<dbReference type="OMA" id="AKRTFYW"/>
<dbReference type="OrthoDB" id="1678617at2759"/>
<dbReference type="UniPathway" id="UPA00768"/>
<dbReference type="Proteomes" id="UP000002530">
    <property type="component" value="Chromosome 5"/>
</dbReference>
<dbReference type="GO" id="GO:0005783">
    <property type="term" value="C:endoplasmic reticulum"/>
    <property type="evidence" value="ECO:0000318"/>
    <property type="project" value="GO_Central"/>
</dbReference>
<dbReference type="GO" id="GO:0005789">
    <property type="term" value="C:endoplasmic reticulum membrane"/>
    <property type="evidence" value="ECO:0007669"/>
    <property type="project" value="UniProtKB-SubCell"/>
</dbReference>
<dbReference type="GO" id="GO:0050660">
    <property type="term" value="F:flavin adenine dinucleotide binding"/>
    <property type="evidence" value="ECO:0007669"/>
    <property type="project" value="InterPro"/>
</dbReference>
<dbReference type="GO" id="GO:0004506">
    <property type="term" value="F:squalene monooxygenase activity"/>
    <property type="evidence" value="ECO:0000318"/>
    <property type="project" value="GO_Central"/>
</dbReference>
<dbReference type="GO" id="GO:0006696">
    <property type="term" value="P:ergosterol biosynthetic process"/>
    <property type="evidence" value="ECO:0000318"/>
    <property type="project" value="GO_Central"/>
</dbReference>
<dbReference type="FunFam" id="3.50.50.60:FF:000166">
    <property type="entry name" value="Squalene monooxygenase Erg1"/>
    <property type="match status" value="1"/>
</dbReference>
<dbReference type="Gene3D" id="3.50.50.60">
    <property type="entry name" value="FAD/NAD(P)-binding domain"/>
    <property type="match status" value="1"/>
</dbReference>
<dbReference type="InterPro" id="IPR036188">
    <property type="entry name" value="FAD/NAD-bd_sf"/>
</dbReference>
<dbReference type="InterPro" id="IPR013698">
    <property type="entry name" value="Squalene_epoxidase"/>
</dbReference>
<dbReference type="InterPro" id="IPR040125">
    <property type="entry name" value="Squalene_monox"/>
</dbReference>
<dbReference type="PANTHER" id="PTHR10835">
    <property type="entry name" value="SQUALENE MONOOXYGENASE"/>
    <property type="match status" value="1"/>
</dbReference>
<dbReference type="PANTHER" id="PTHR10835:SF0">
    <property type="entry name" value="SQUALENE MONOOXYGENASE"/>
    <property type="match status" value="1"/>
</dbReference>
<dbReference type="Pfam" id="PF08491">
    <property type="entry name" value="SE"/>
    <property type="match status" value="1"/>
</dbReference>
<dbReference type="PRINTS" id="PR00420">
    <property type="entry name" value="RNGMNOXGNASE"/>
</dbReference>
<dbReference type="SUPFAM" id="SSF51905">
    <property type="entry name" value="FAD/NAD(P)-binding domain"/>
    <property type="match status" value="1"/>
</dbReference>
<accession>E9R5G2</accession>
<organism>
    <name type="scientific">Aspergillus fumigatus (strain ATCC MYA-4609 / CBS 101355 / FGSC A1100 / Af293)</name>
    <name type="common">Neosartorya fumigata</name>
    <dbReference type="NCBI Taxonomy" id="330879"/>
    <lineage>
        <taxon>Eukaryota</taxon>
        <taxon>Fungi</taxon>
        <taxon>Dikarya</taxon>
        <taxon>Ascomycota</taxon>
        <taxon>Pezizomycotina</taxon>
        <taxon>Eurotiomycetes</taxon>
        <taxon>Eurotiomycetidae</taxon>
        <taxon>Eurotiales</taxon>
        <taxon>Aspergillaceae</taxon>
        <taxon>Aspergillus</taxon>
        <taxon>Aspergillus subgen. Fumigati</taxon>
    </lineage>
</organism>
<comment type="function">
    <text evidence="1 7 8">Squalene epoxidase; part of the third module of ergosterol biosynthesis pathway that includes the late steps of the pathway (Probable) (PubMed:16110826). Erg1 catalyzes the epoxidation of squalene into 2,3-epoxysqualene (By similarity). The third module or late pathway involves the ergosterol synthesis itself through consecutive reactions that mainly occur in the endoplasmic reticulum (ER) membrane. Firstly, the squalene synthase erg9 catalyzes the condensation of 2 farnesyl pyrophosphate moieties to form squalene, which is the precursor of all steroids. Squalene synthase is crucial for balancing the incorporation of farnesyl diphosphate (FPP) into sterol and nonsterol isoprene synthesis. Secondly, squalene is converted into lanosterol by the consecutive action of the squalene epoxidase erg1 and the lanosterol synthase erg7. Then, the delta(24)-sterol C-methyltransferase erg6 methylates lanosterol at C-24 to produce eburicol. Eburicol is the substrate of the sterol 14-alpha demethylase encoded by cyp51A and cyp51B, to yield 4,4,24-trimethyl ergosta-8,14,24(28)-trienol. The C-14 reductase erg24 then reduces the C14=C15 double bond which leads to 4,4-dimethylfecosterol. A sequence of further demethylations at C-4, involving the C-4 demethylation complex containing the C-4 methylsterol oxidases erg25A or erg25B, the sterol-4-alpha-carboxylate 3-dehydrogenase erg26 and the 3-keto-steroid reductase erg27, leads to the production of fecosterol via 4-methylfecosterol. The C-8 sterol isomerase erg2 then catalyzes the reaction which results in unsaturation at C-7 in the B ring of sterols and thus converts fecosterol to episterol. The sterol-C5-desaturase erg3B then catalyzes the introduction of a C-5 double bond in the B ring to produce 5-dehydroepisterol. The 2 other sterol-C5-desaturases, erg3A and erg3C, seem to be less important in ergosterol biosynthesis. The C-22 sterol desaturase erg5 further converts 5-dehydroepisterol into ergosta-5,7,22,24(28)-tetraen-3beta-ol by forming the C-22(23) double bond in the sterol side chain. Finally, ergosta-5,7,22,24(28)-tetraen-3beta-ol is substrate of the C-24(28) sterol reductases erg4A and erg4B to produce ergosterol. Possible alternative sterol biosynthetic pathways might exist from fecosterol to ergosterol, depending on the activities of the erg3 isoforms (Probable) (PubMed:16110826, PubMed:18191972).</text>
</comment>
<comment type="catalytic activity">
    <reaction evidence="1">
        <text>squalene + reduced [NADPH--hemoprotein reductase] + O2 = (S)-2,3-epoxysqualene + oxidized [NADPH--hemoprotein reductase] + H2O + H(+)</text>
        <dbReference type="Rhea" id="RHEA:25282"/>
        <dbReference type="Rhea" id="RHEA-COMP:11964"/>
        <dbReference type="Rhea" id="RHEA-COMP:11965"/>
        <dbReference type="ChEBI" id="CHEBI:15377"/>
        <dbReference type="ChEBI" id="CHEBI:15378"/>
        <dbReference type="ChEBI" id="CHEBI:15379"/>
        <dbReference type="ChEBI" id="CHEBI:15440"/>
        <dbReference type="ChEBI" id="CHEBI:15441"/>
        <dbReference type="ChEBI" id="CHEBI:57618"/>
        <dbReference type="ChEBI" id="CHEBI:58210"/>
        <dbReference type="EC" id="1.14.14.17"/>
    </reaction>
</comment>
<comment type="cofactor">
    <cofactor evidence="2">
        <name>FAD</name>
        <dbReference type="ChEBI" id="CHEBI:57692"/>
    </cofactor>
</comment>
<comment type="pathway">
    <text evidence="1">Steroid metabolism; ergosterol biosynthesis.</text>
</comment>
<comment type="subcellular location">
    <subcellularLocation>
        <location evidence="1">Endoplasmic reticulum membrane</location>
        <topology evidence="3">Multi-pass membrane protein</topology>
    </subcellularLocation>
    <subcellularLocation>
        <location evidence="1">Microsome membrane</location>
        <topology evidence="3">Multi-pass membrane protein</topology>
    </subcellularLocation>
</comment>
<comment type="miscellaneous">
    <text evidence="8">In Aspergillus, the biosynthesis pathway of the sterol precursors leading to the prevalent sterol ergosterol differs from yeast. The ring system of lanosterol in S.cerevisiae is firstly demethylised in three enzymatic steps leading to the intermediate zymosterol and secondly a methyl group is added to zymosterol by the sterol 24-C-methyltransferase to form fecosterol. In Aspergillus, lanosterol is firstly transmethylated by the sterol 24-C-methyltransferase leading to the intermediate eburicol and secondly demethylated in three steps to form fecosterol.</text>
</comment>
<comment type="similarity">
    <text evidence="6">Belongs to the squalene monooxygenase family.</text>
</comment>
<reference key="1">
    <citation type="journal article" date="2005" name="Nature">
        <title>Genomic sequence of the pathogenic and allergenic filamentous fungus Aspergillus fumigatus.</title>
        <authorList>
            <person name="Nierman W.C."/>
            <person name="Pain A."/>
            <person name="Anderson M.J."/>
            <person name="Wortman J.R."/>
            <person name="Kim H.S."/>
            <person name="Arroyo J."/>
            <person name="Berriman M."/>
            <person name="Abe K."/>
            <person name="Archer D.B."/>
            <person name="Bermejo C."/>
            <person name="Bennett J.W."/>
            <person name="Bowyer P."/>
            <person name="Chen D."/>
            <person name="Collins M."/>
            <person name="Coulsen R."/>
            <person name="Davies R."/>
            <person name="Dyer P.S."/>
            <person name="Farman M.L."/>
            <person name="Fedorova N."/>
            <person name="Fedorova N.D."/>
            <person name="Feldblyum T.V."/>
            <person name="Fischer R."/>
            <person name="Fosker N."/>
            <person name="Fraser A."/>
            <person name="Garcia J.L."/>
            <person name="Garcia M.J."/>
            <person name="Goble A."/>
            <person name="Goldman G.H."/>
            <person name="Gomi K."/>
            <person name="Griffith-Jones S."/>
            <person name="Gwilliam R."/>
            <person name="Haas B.J."/>
            <person name="Haas H."/>
            <person name="Harris D.E."/>
            <person name="Horiuchi H."/>
            <person name="Huang J."/>
            <person name="Humphray S."/>
            <person name="Jimenez J."/>
            <person name="Keller N."/>
            <person name="Khouri H."/>
            <person name="Kitamoto K."/>
            <person name="Kobayashi T."/>
            <person name="Konzack S."/>
            <person name="Kulkarni R."/>
            <person name="Kumagai T."/>
            <person name="Lafton A."/>
            <person name="Latge J.-P."/>
            <person name="Li W."/>
            <person name="Lord A."/>
            <person name="Lu C."/>
            <person name="Majoros W.H."/>
            <person name="May G.S."/>
            <person name="Miller B.L."/>
            <person name="Mohamoud Y."/>
            <person name="Molina M."/>
            <person name="Monod M."/>
            <person name="Mouyna I."/>
            <person name="Mulligan S."/>
            <person name="Murphy L.D."/>
            <person name="O'Neil S."/>
            <person name="Paulsen I."/>
            <person name="Penalva M.A."/>
            <person name="Pertea M."/>
            <person name="Price C."/>
            <person name="Pritchard B.L."/>
            <person name="Quail M.A."/>
            <person name="Rabbinowitsch E."/>
            <person name="Rawlins N."/>
            <person name="Rajandream M.A."/>
            <person name="Reichard U."/>
            <person name="Renauld H."/>
            <person name="Robson G.D."/>
            <person name="Rodriguez de Cordoba S."/>
            <person name="Rodriguez-Pena J.M."/>
            <person name="Ronning C.M."/>
            <person name="Rutter S."/>
            <person name="Salzberg S.L."/>
            <person name="Sanchez M."/>
            <person name="Sanchez-Ferrero J.C."/>
            <person name="Saunders D."/>
            <person name="Seeger K."/>
            <person name="Squares R."/>
            <person name="Squares S."/>
            <person name="Takeuchi M."/>
            <person name="Tekaia F."/>
            <person name="Turner G."/>
            <person name="Vazquez de Aldana C.R."/>
            <person name="Weidman J."/>
            <person name="White O."/>
            <person name="Woodward J.R."/>
            <person name="Yu J.-H."/>
            <person name="Fraser C.M."/>
            <person name="Galagan J.E."/>
            <person name="Asai K."/>
            <person name="Machida M."/>
            <person name="Hall N."/>
            <person name="Barrell B.G."/>
            <person name="Denning D.W."/>
        </authorList>
    </citation>
    <scope>NUCLEOTIDE SEQUENCE [LARGE SCALE GENOMIC DNA]</scope>
    <source>
        <strain>ATCC MYA-4609 / CBS 101355 / FGSC A1100 / Af293</strain>
    </source>
</reference>
<reference key="2">
    <citation type="journal article" date="2005" name="Med. Mycol.">
        <title>The ergosterol biosynthesis pathway, transporter genes, and azole resistance in Aspergillus fumigatus.</title>
        <authorList>
            <person name="Ferreira M.E."/>
            <person name="Colombo A.L."/>
            <person name="Paulsen I."/>
            <person name="Ren Q."/>
            <person name="Wortman J."/>
            <person name="Huang J."/>
            <person name="Goldman M.H."/>
            <person name="Goldman G.H."/>
        </authorList>
    </citation>
    <scope>IDENTIFICATION</scope>
    <scope>FUNCTION</scope>
    <scope>PATHWAY</scope>
</reference>
<reference key="3">
    <citation type="journal article" date="2008" name="Steroids">
        <title>Ergosterol biosynthesis pathway in Aspergillus fumigatus.</title>
        <authorList>
            <person name="Alcazar-Fuoli L."/>
            <person name="Mellado E."/>
            <person name="Garcia-Effron G."/>
            <person name="Lopez J.F."/>
            <person name="Grimalt J.O."/>
            <person name="Cuenca-Estrella J.M."/>
            <person name="Rodriguez-Tudela J.L."/>
        </authorList>
    </citation>
    <scope>FUNCTION</scope>
</reference>
<evidence type="ECO:0000250" key="1">
    <source>
        <dbReference type="UniProtKB" id="P32476"/>
    </source>
</evidence>
<evidence type="ECO:0000250" key="2">
    <source>
        <dbReference type="UniProtKB" id="Q14534"/>
    </source>
</evidence>
<evidence type="ECO:0000255" key="3"/>
<evidence type="ECO:0000255" key="4">
    <source>
        <dbReference type="PROSITE-ProRule" id="PRU00498"/>
    </source>
</evidence>
<evidence type="ECO:0000303" key="5">
    <source>
    </source>
</evidence>
<evidence type="ECO:0000305" key="6"/>
<evidence type="ECO:0000305" key="7">
    <source>
    </source>
</evidence>
<evidence type="ECO:0000305" key="8">
    <source>
    </source>
</evidence>
<sequence length="481" mass="52683">MATTPINGHATKSPSLDAAEARRLKHNHADVVIIGAGVLGCALAVALGRQGRSVILLEASLKEPDRIVGELLQPGGVQALEKLGLRDCLEGIDSIPVKGYYVSYFNDPVPIPYPKPTPASPPPEGRCFHHGRFVMKLREAAMACPNVSVVETKATDLVTCSHTQQVLGVECTSKDNVRACYFGHLTVVADGYASKFRKQHHPHTPKVSSRFWGLELIDTKLPMPYYGHVLLSDNAPILLYQIGTHETRILVDIPENLPSASVKNGGVKSHMRNVVLPSLPESVQPAFIAALEQGQLRSMPNSFLPAATNTTPGLVILGDALNMRHPLTGGGMTVAFNDVVTLRNLLSPEKVPNLGDTKRVMKQLSTFHWERKKAASVINILAQALYSLFAADNQYLRALQRGCFRYFQLGLVDGPAGLLGGLIQKPSVLFVHFFSVALLSLWVLLREYPPYLFPVALFKCIMTFWTACVVIFPYMLIEAFC</sequence>
<feature type="chain" id="PRO_0000454117" description="Squalene epoxidase erg1">
    <location>
        <begin position="1"/>
        <end position="481"/>
    </location>
</feature>
<feature type="transmembrane region" description="Helical" evidence="3">
    <location>
        <begin position="28"/>
        <end position="48"/>
    </location>
</feature>
<feature type="transmembrane region" description="Helical" evidence="3">
    <location>
        <begin position="425"/>
        <end position="445"/>
    </location>
</feature>
<feature type="transmembrane region" description="Helical" evidence="3">
    <location>
        <begin position="452"/>
        <end position="472"/>
    </location>
</feature>
<feature type="binding site" evidence="2">
    <location>
        <begin position="38"/>
        <end position="39"/>
    </location>
    <ligand>
        <name>FAD</name>
        <dbReference type="ChEBI" id="CHEBI:57692"/>
    </ligand>
</feature>
<feature type="binding site" evidence="2">
    <location>
        <begin position="58"/>
        <end position="59"/>
    </location>
    <ligand>
        <name>FAD</name>
        <dbReference type="ChEBI" id="CHEBI:57692"/>
    </ligand>
</feature>
<feature type="binding site" evidence="2">
    <location>
        <position position="66"/>
    </location>
    <ligand>
        <name>FAD</name>
        <dbReference type="ChEBI" id="CHEBI:57692"/>
    </ligand>
</feature>
<feature type="binding site" evidence="2">
    <location>
        <position position="138"/>
    </location>
    <ligand>
        <name>FAD</name>
        <dbReference type="ChEBI" id="CHEBI:57692"/>
    </ligand>
</feature>
<feature type="binding site" evidence="2">
    <location>
        <position position="319"/>
    </location>
    <ligand>
        <name>FAD</name>
        <dbReference type="ChEBI" id="CHEBI:57692"/>
    </ligand>
</feature>
<feature type="binding site" evidence="2">
    <location>
        <position position="332"/>
    </location>
    <ligand>
        <name>FAD</name>
        <dbReference type="ChEBI" id="CHEBI:57692"/>
    </ligand>
</feature>
<feature type="site" description="Important for enzyme activity" evidence="2">
    <location>
        <position position="100"/>
    </location>
</feature>
<feature type="glycosylation site" description="N-linked (GlcNAc...) asparagine" evidence="4">
    <location>
        <position position="146"/>
    </location>
</feature>
<proteinExistence type="inferred from homology"/>
<protein>
    <recommendedName>
        <fullName evidence="5">Squalene epoxidase erg1</fullName>
        <shortName evidence="5">SE</shortName>
        <ecNumber evidence="1">1.14.14.17</ecNumber>
    </recommendedName>
    <alternativeName>
        <fullName evidence="5">Ergosterol biosynthesis protein 1</fullName>
    </alternativeName>
    <alternativeName>
        <fullName evidence="6">Squalene monooxygenase erg1</fullName>
    </alternativeName>
</protein>
<gene>
    <name evidence="5" type="primary">erg1</name>
    <name type="ORF">AFUA_5G07780</name>
</gene>
<name>ERG1_ASPFU</name>
<keyword id="KW-0256">Endoplasmic reticulum</keyword>
<keyword id="KW-0274">FAD</keyword>
<keyword id="KW-0285">Flavoprotein</keyword>
<keyword id="KW-0325">Glycoprotein</keyword>
<keyword id="KW-0444">Lipid biosynthesis</keyword>
<keyword id="KW-0443">Lipid metabolism</keyword>
<keyword id="KW-0472">Membrane</keyword>
<keyword id="KW-0492">Microsome</keyword>
<keyword id="KW-0503">Monooxygenase</keyword>
<keyword id="KW-0560">Oxidoreductase</keyword>
<keyword id="KW-1185">Reference proteome</keyword>
<keyword id="KW-0752">Steroid biosynthesis</keyword>
<keyword id="KW-0753">Steroid metabolism</keyword>
<keyword id="KW-0756">Sterol biosynthesis</keyword>
<keyword id="KW-1207">Sterol metabolism</keyword>
<keyword id="KW-0812">Transmembrane</keyword>
<keyword id="KW-1133">Transmembrane helix</keyword>